<organism>
    <name type="scientific">Escherichia coli (strain K12)</name>
    <dbReference type="NCBI Taxonomy" id="83333"/>
    <lineage>
        <taxon>Bacteria</taxon>
        <taxon>Pseudomonadati</taxon>
        <taxon>Pseudomonadota</taxon>
        <taxon>Gammaproteobacteria</taxon>
        <taxon>Enterobacterales</taxon>
        <taxon>Enterobacteriaceae</taxon>
        <taxon>Escherichia</taxon>
    </lineage>
</organism>
<accession>P41072</accession>
<name>TRBG_ECOLI</name>
<gene>
    <name type="primary">trbG</name>
    <name type="ordered locus">ECOK12F081</name>
</gene>
<feature type="chain" id="PRO_0000068491" description="Protein TrbG">
    <location>
        <begin position="1"/>
        <end position="83"/>
    </location>
</feature>
<proteinExistence type="predicted"/>
<sequence length="83" mass="9126">MNKLVSDGSVKKINYPVLYESGITPPLCEVSAPEPDAGGKRIVAYVYKSSRSTVFENPDIVKTCTVRDLKKDFVNCDEKGEGQ</sequence>
<reference key="1">
    <citation type="journal article" date="1994" name="J. Bacteriol.">
        <title>Molecular analysis of the F plasmid traVR region: traV encodes a lipoprotein.</title>
        <authorList>
            <person name="Doran T.J."/>
            <person name="Loh S.M."/>
            <person name="Firth N."/>
            <person name="Skurray R.A."/>
        </authorList>
    </citation>
    <scope>NUCLEOTIDE SEQUENCE [GENOMIC DNA]</scope>
</reference>
<reference key="2">
    <citation type="journal article" date="1994" name="Microbiol. Rev.">
        <title>Analysis of the sequence and gene products of the transfer region of the F sex factor.</title>
        <authorList>
            <person name="Frost L.S."/>
            <person name="Ippen-Ihler K."/>
            <person name="Skurray R.A."/>
        </authorList>
    </citation>
    <scope>NUCLEOTIDE SEQUENCE [GENOMIC DNA]</scope>
</reference>
<reference key="3">
    <citation type="submission" date="2000-04" db="EMBL/GenBank/DDBJ databases">
        <title>Complete nucleotide sequence of the F plasmid: its implications for organization and diversification of plasmid genomes.</title>
        <authorList>
            <person name="Shimizu H."/>
            <person name="Saitoh Y."/>
            <person name="Suda Y."/>
            <person name="Uehara K."/>
            <person name="Sampei G."/>
            <person name="Mizobuchi K."/>
        </authorList>
    </citation>
    <scope>NUCLEOTIDE SEQUENCE [LARGE SCALE GENOMIC DNA]</scope>
    <source>
        <strain>K12 / CR63</strain>
    </source>
</reference>
<keyword id="KW-0614">Plasmid</keyword>
<dbReference type="EMBL" id="U01159">
    <property type="protein sequence ID" value="AAC44209.1"/>
    <property type="molecule type" value="Genomic_DNA"/>
</dbReference>
<dbReference type="EMBL" id="AP001918">
    <property type="protein sequence ID" value="BAA97951.1"/>
    <property type="molecule type" value="Genomic_DNA"/>
</dbReference>
<dbReference type="RefSeq" id="NP_061460.1">
    <property type="nucleotide sequence ID" value="NC_002483.1"/>
</dbReference>
<dbReference type="RefSeq" id="NP_862926.1">
    <property type="nucleotide sequence ID" value="NC_004998.1"/>
</dbReference>
<dbReference type="RefSeq" id="WP_001038342.1">
    <property type="nucleotide sequence ID" value="NZ_SSUW01000046.1"/>
</dbReference>
<dbReference type="RefSeq" id="YP_001816528.1">
    <property type="nucleotide sequence ID" value="NC_010558.1"/>
</dbReference>
<dbReference type="RefSeq" id="YP_001965441.1">
    <property type="nucleotide sequence ID" value="NC_010862.1"/>
</dbReference>
<dbReference type="RefSeq" id="YP_009068344.1">
    <property type="nucleotide sequence ID" value="NC_025139.1"/>
</dbReference>
<dbReference type="RefSeq" id="YP_009070609.1">
    <property type="nucleotide sequence ID" value="NC_025175.1"/>
</dbReference>
<dbReference type="RefSeq" id="YP_009071237.1">
    <property type="nucleotide sequence ID" value="NC_025179.1"/>
</dbReference>
<dbReference type="KEGG" id="ecoc:C3026_24510"/>
<dbReference type="PATRIC" id="fig|83333.107.peg.632"/>
<dbReference type="PRO" id="PR:P41072"/>
<dbReference type="NCBIfam" id="NF010307">
    <property type="entry name" value="PRK13744.1"/>
    <property type="match status" value="1"/>
</dbReference>
<geneLocation type="plasmid">
    <name>F</name>
</geneLocation>
<protein>
    <recommendedName>
        <fullName>Protein TrbG</fullName>
    </recommendedName>
</protein>